<protein>
    <recommendedName>
        <fullName evidence="4">Hydroxyacyl-CoA dehydrogenase ChsB1</fullName>
        <ecNumber evidence="3">1.1.1.-</ecNumber>
    </recommendedName>
</protein>
<dbReference type="EC" id="1.1.1.-" evidence="3"/>
<dbReference type="EMBL" id="AL123456">
    <property type="protein sequence ID" value="CCP46324.1"/>
    <property type="molecule type" value="Genomic_DNA"/>
</dbReference>
<dbReference type="RefSeq" id="NP_218019.1">
    <property type="nucleotide sequence ID" value="NC_000962.3"/>
</dbReference>
<dbReference type="RefSeq" id="WP_003418990.1">
    <property type="nucleotide sequence ID" value="NZ_NVQJ01000042.1"/>
</dbReference>
<dbReference type="PDB" id="7LG9">
    <property type="method" value="X-ray"/>
    <property type="resolution" value="2.03 A"/>
    <property type="chains" value="A/B=1-317"/>
</dbReference>
<dbReference type="PDB" id="7LGB">
    <property type="method" value="X-ray"/>
    <property type="resolution" value="2.21 A"/>
    <property type="chains" value="A=1-317"/>
</dbReference>
<dbReference type="PDBsum" id="7LG9"/>
<dbReference type="PDBsum" id="7LGB"/>
<dbReference type="SMR" id="O53547"/>
<dbReference type="FunCoup" id="O53547">
    <property type="interactions" value="1"/>
</dbReference>
<dbReference type="STRING" id="83332.Rv3502c"/>
<dbReference type="PaxDb" id="83332-Rv3502c"/>
<dbReference type="DNASU" id="887697"/>
<dbReference type="GeneID" id="887697"/>
<dbReference type="KEGG" id="mtu:Rv3502c"/>
<dbReference type="KEGG" id="mtv:RVBD_3502c"/>
<dbReference type="PATRIC" id="fig|83332.111.peg.3900"/>
<dbReference type="TubercuList" id="Rv3502c"/>
<dbReference type="eggNOG" id="COG1028">
    <property type="taxonomic scope" value="Bacteria"/>
</dbReference>
<dbReference type="InParanoid" id="O53547"/>
<dbReference type="OrthoDB" id="9808187at2"/>
<dbReference type="PhylomeDB" id="O53547"/>
<dbReference type="BioCyc" id="MetaCyc:G185E-7779-MONOMER"/>
<dbReference type="UniPathway" id="UPA01058"/>
<dbReference type="Proteomes" id="UP000001584">
    <property type="component" value="Chromosome"/>
</dbReference>
<dbReference type="GO" id="GO:0003857">
    <property type="term" value="F:3-hydroxyacyl-CoA dehydrogenase activity"/>
    <property type="evidence" value="ECO:0000318"/>
    <property type="project" value="GO_Central"/>
</dbReference>
<dbReference type="GO" id="GO:0004300">
    <property type="term" value="F:enoyl-CoA hydratase activity"/>
    <property type="evidence" value="ECO:0000318"/>
    <property type="project" value="GO_Central"/>
</dbReference>
<dbReference type="GO" id="GO:0006707">
    <property type="term" value="P:cholesterol catabolic process"/>
    <property type="evidence" value="ECO:0007669"/>
    <property type="project" value="UniProtKB-UniPathway"/>
</dbReference>
<dbReference type="GO" id="GO:0006635">
    <property type="term" value="P:fatty acid beta-oxidation"/>
    <property type="evidence" value="ECO:0000318"/>
    <property type="project" value="GO_Central"/>
</dbReference>
<dbReference type="Gene3D" id="3.40.50.720">
    <property type="entry name" value="NAD(P)-binding Rossmann-like Domain"/>
    <property type="match status" value="1"/>
</dbReference>
<dbReference type="InterPro" id="IPR036291">
    <property type="entry name" value="NAD(P)-bd_dom_sf"/>
</dbReference>
<dbReference type="InterPro" id="IPR051687">
    <property type="entry name" value="Peroxisomal_Beta-Oxidation"/>
</dbReference>
<dbReference type="InterPro" id="IPR020904">
    <property type="entry name" value="Sc_DH/Rdtase_CS"/>
</dbReference>
<dbReference type="InterPro" id="IPR002347">
    <property type="entry name" value="SDR_fam"/>
</dbReference>
<dbReference type="NCBIfam" id="NF005862">
    <property type="entry name" value="PRK07792.1"/>
    <property type="match status" value="1"/>
</dbReference>
<dbReference type="PANTHER" id="PTHR45024">
    <property type="entry name" value="DEHYDROGENASES, SHORT CHAIN"/>
    <property type="match status" value="1"/>
</dbReference>
<dbReference type="PANTHER" id="PTHR45024:SF2">
    <property type="entry name" value="SCP2 DOMAIN-CONTAINING PROTEIN"/>
    <property type="match status" value="1"/>
</dbReference>
<dbReference type="Pfam" id="PF00106">
    <property type="entry name" value="adh_short"/>
    <property type="match status" value="1"/>
</dbReference>
<dbReference type="PRINTS" id="PR00081">
    <property type="entry name" value="GDHRDH"/>
</dbReference>
<dbReference type="PRINTS" id="PR00080">
    <property type="entry name" value="SDRFAMILY"/>
</dbReference>
<dbReference type="SMART" id="SM00822">
    <property type="entry name" value="PKS_KR"/>
    <property type="match status" value="1"/>
</dbReference>
<dbReference type="SUPFAM" id="SSF51735">
    <property type="entry name" value="NAD(P)-binding Rossmann-fold domains"/>
    <property type="match status" value="1"/>
</dbReference>
<dbReference type="PROSITE" id="PS00061">
    <property type="entry name" value="ADH_SHORT"/>
    <property type="match status" value="1"/>
</dbReference>
<name>CHSB1_MYCTU</name>
<evidence type="ECO:0000269" key="1">
    <source>
    </source>
</evidence>
<evidence type="ECO:0000269" key="2">
    <source>
    </source>
</evidence>
<evidence type="ECO:0000269" key="3">
    <source>
    </source>
</evidence>
<evidence type="ECO:0000303" key="4">
    <source>
    </source>
</evidence>
<evidence type="ECO:0000305" key="5"/>
<evidence type="ECO:0000305" key="6">
    <source>
    </source>
</evidence>
<evidence type="ECO:0000312" key="7">
    <source>
        <dbReference type="EMBL" id="CCP46324.1"/>
    </source>
</evidence>
<evidence type="ECO:0000312" key="8">
    <source>
        <dbReference type="PDB" id="7LGB"/>
    </source>
</evidence>
<evidence type="ECO:0007744" key="9">
    <source>
        <dbReference type="PDB" id="7LG9"/>
    </source>
</evidence>
<evidence type="ECO:0007744" key="10">
    <source>
        <dbReference type="PDB" id="7LGB"/>
    </source>
</evidence>
<evidence type="ECO:0007744" key="11">
    <source>
    </source>
</evidence>
<evidence type="ECO:0007829" key="12">
    <source>
        <dbReference type="PDB" id="7LG9"/>
    </source>
</evidence>
<evidence type="ECO:0007829" key="13">
    <source>
        <dbReference type="PDB" id="7LGB"/>
    </source>
</evidence>
<organism>
    <name type="scientific">Mycobacterium tuberculosis (strain ATCC 25618 / H37Rv)</name>
    <dbReference type="NCBI Taxonomy" id="83332"/>
    <lineage>
        <taxon>Bacteria</taxon>
        <taxon>Bacillati</taxon>
        <taxon>Actinomycetota</taxon>
        <taxon>Actinomycetes</taxon>
        <taxon>Mycobacteriales</taxon>
        <taxon>Mycobacteriaceae</taxon>
        <taxon>Mycobacterium</taxon>
        <taxon>Mycobacterium tuberculosis complex</taxon>
    </lineage>
</organism>
<accession>O53547</accession>
<accession>F2GJ65</accession>
<accession>I6YGB8</accession>
<keyword id="KW-0002">3D-structure</keyword>
<keyword id="KW-0153">Cholesterol metabolism</keyword>
<keyword id="KW-0443">Lipid metabolism</keyword>
<keyword id="KW-0520">NAD</keyword>
<keyword id="KW-0560">Oxidoreductase</keyword>
<keyword id="KW-1185">Reference proteome</keyword>
<keyword id="KW-0753">Steroid metabolism</keyword>
<keyword id="KW-1207">Sterol metabolism</keyword>
<feature type="chain" id="PRO_0000456535" description="Hydroxyacyl-CoA dehydrogenase ChsB1">
    <location>
        <begin position="1"/>
        <end position="317"/>
    </location>
</feature>
<feature type="active site" evidence="6">
    <location>
        <position position="168"/>
    </location>
</feature>
<feature type="active site" evidence="6">
    <location>
        <position position="181"/>
    </location>
</feature>
<feature type="active site" evidence="6">
    <location>
        <position position="185"/>
    </location>
</feature>
<feature type="binding site" evidence="3 8">
    <location>
        <position position="32"/>
    </location>
    <ligand>
        <name>NAD(+)</name>
        <dbReference type="ChEBI" id="CHEBI:57540"/>
    </ligand>
</feature>
<feature type="binding site" evidence="3 8">
    <location>
        <position position="51"/>
    </location>
    <ligand>
        <name>NAD(+)</name>
        <dbReference type="ChEBI" id="CHEBI:57540"/>
    </ligand>
</feature>
<feature type="binding site" evidence="3 8">
    <location>
        <position position="82"/>
    </location>
    <ligand>
        <name>NAD(+)</name>
        <dbReference type="ChEBI" id="CHEBI:57540"/>
    </ligand>
</feature>
<feature type="binding site" evidence="3 8">
    <location>
        <position position="83"/>
    </location>
    <ligand>
        <name>NAD(+)</name>
        <dbReference type="ChEBI" id="CHEBI:57540"/>
    </ligand>
</feature>
<feature type="binding site" evidence="3 8">
    <location>
        <position position="108"/>
    </location>
    <ligand>
        <name>NAD(+)</name>
        <dbReference type="ChEBI" id="CHEBI:57540"/>
    </ligand>
</feature>
<feature type="binding site" evidence="3 8">
    <location>
        <position position="168"/>
    </location>
    <ligand>
        <name>NAD(+)</name>
        <dbReference type="ChEBI" id="CHEBI:57540"/>
    </ligand>
</feature>
<feature type="binding site" evidence="3 8">
    <location>
        <position position="181"/>
    </location>
    <ligand>
        <name>NAD(+)</name>
        <dbReference type="ChEBI" id="CHEBI:57540"/>
    </ligand>
</feature>
<feature type="binding site" evidence="3 8">
    <location>
        <position position="185"/>
    </location>
    <ligand>
        <name>NAD(+)</name>
        <dbReference type="ChEBI" id="CHEBI:57540"/>
    </ligand>
</feature>
<feature type="binding site" evidence="3 8">
    <location>
        <position position="215"/>
    </location>
    <ligand>
        <name>NAD(+)</name>
        <dbReference type="ChEBI" id="CHEBI:57540"/>
    </ligand>
</feature>
<feature type="strand" evidence="12">
    <location>
        <begin position="22"/>
        <end position="27"/>
    </location>
</feature>
<feature type="helix" evidence="12">
    <location>
        <begin position="31"/>
        <end position="41"/>
    </location>
</feature>
<feature type="turn" evidence="12">
    <location>
        <begin position="42"/>
        <end position="44"/>
    </location>
</feature>
<feature type="strand" evidence="12">
    <location>
        <begin position="46"/>
        <end position="51"/>
    </location>
</feature>
<feature type="helix" evidence="12">
    <location>
        <begin position="53"/>
        <end position="58"/>
    </location>
</feature>
<feature type="helix" evidence="12">
    <location>
        <begin position="61"/>
        <end position="64"/>
    </location>
</feature>
<feature type="turn" evidence="12">
    <location>
        <begin position="65"/>
        <end position="67"/>
    </location>
</feature>
<feature type="helix" evidence="12">
    <location>
        <begin position="68"/>
        <end position="71"/>
    </location>
</feature>
<feature type="strand" evidence="12">
    <location>
        <begin position="76"/>
        <end position="81"/>
    </location>
</feature>
<feature type="helix" evidence="12">
    <location>
        <begin position="86"/>
        <end position="98"/>
    </location>
</feature>
<feature type="strand" evidence="12">
    <location>
        <begin position="104"/>
        <end position="107"/>
    </location>
</feature>
<feature type="helix" evidence="12">
    <location>
        <begin position="117"/>
        <end position="119"/>
    </location>
</feature>
<feature type="helix" evidence="12">
    <location>
        <begin position="122"/>
        <end position="152"/>
    </location>
</feature>
<feature type="strand" evidence="12">
    <location>
        <begin position="161"/>
        <end position="166"/>
    </location>
</feature>
<feature type="helix" evidence="12">
    <location>
        <begin position="170"/>
        <end position="173"/>
    </location>
</feature>
<feature type="helix" evidence="12">
    <location>
        <begin position="179"/>
        <end position="199"/>
    </location>
</feature>
<feature type="helix" evidence="12">
    <location>
        <begin position="200"/>
        <end position="202"/>
    </location>
</feature>
<feature type="strand" evidence="12">
    <location>
        <begin position="204"/>
        <end position="211"/>
    </location>
</feature>
<feature type="turn" evidence="13">
    <location>
        <begin position="216"/>
        <end position="218"/>
    </location>
</feature>
<feature type="helix" evidence="13">
    <location>
        <begin position="219"/>
        <end position="222"/>
    </location>
</feature>
<feature type="helix" evidence="12">
    <location>
        <begin position="239"/>
        <end position="248"/>
    </location>
</feature>
<feature type="helix" evidence="12">
    <location>
        <begin position="251"/>
        <end position="253"/>
    </location>
</feature>
<feature type="strand" evidence="12">
    <location>
        <begin position="260"/>
        <end position="263"/>
    </location>
</feature>
<feature type="strand" evidence="12">
    <location>
        <begin position="265"/>
        <end position="271"/>
    </location>
</feature>
<feature type="strand" evidence="12">
    <location>
        <begin position="276"/>
        <end position="281"/>
    </location>
</feature>
<feature type="strand" evidence="12">
    <location>
        <begin position="283"/>
        <end position="286"/>
    </location>
</feature>
<feature type="helix" evidence="12">
    <location>
        <begin position="289"/>
        <end position="299"/>
    </location>
</feature>
<feature type="turn" evidence="12">
    <location>
        <begin position="300"/>
        <end position="302"/>
    </location>
</feature>
<proteinExistence type="evidence at protein level"/>
<comment type="function">
    <text evidence="3">A reversible dehydrogenase involved in cholesterol side-chain degradation. Catalyzes the oxidation of hydroxyl-cholesterol-CoA ester metabolic intermediate (22S)-HOCO-CoA (3-oxo-chol-4-ene-(22S)-hydroxy-24-oyl-CoA), the product of ChsH3, has no activity on (22R)-HOCO-CoA (the product of EchA19). Also acts on (3R)-hydroxyoctanoyl-CoA and 17-beta-hydroxyandrost-4-en-3-one, but not on 7-alpha-hydroxyandrost-4-en-3-one, uses NAD(+) but not NADP(+).</text>
</comment>
<comment type="catalytic activity">
    <reaction evidence="3">
        <text>(22S)-hydroxy-3-oxo-chol-4-ene-24-oyl-CoA + NAD(+) = 3,22-dioxochol-4-en-24-oyl-CoA + NADH + H(+)</text>
        <dbReference type="Rhea" id="RHEA:72583"/>
        <dbReference type="ChEBI" id="CHEBI:15378"/>
        <dbReference type="ChEBI" id="CHEBI:57540"/>
        <dbReference type="ChEBI" id="CHEBI:57945"/>
        <dbReference type="ChEBI" id="CHEBI:86014"/>
        <dbReference type="ChEBI" id="CHEBI:192468"/>
    </reaction>
    <physiologicalReaction direction="left-to-right" evidence="3">
        <dbReference type="Rhea" id="RHEA:72584"/>
    </physiologicalReaction>
    <physiologicalReaction direction="right-to-left" evidence="3">
        <dbReference type="Rhea" id="RHEA:72585"/>
    </physiologicalReaction>
</comment>
<comment type="biophysicochemical properties">
    <kinetics>
        <KM evidence="3">5.3 uM for (22S)-HOCO-CoA</KM>
        <KM evidence="3">70 uM for NAD(+) with (22S)-HOCO-CoA</KM>
        <KM evidence="3">169 uM for (3R)-hydroxyoctanoyl-CoA</KM>
        <KM evidence="3">126 uM for NAD(+) with (3R)-hydroxyoctanoyl-CoA</KM>
        <KM evidence="3">369 uM for 17-beta-hydroxyandrost-4-en-3-one</KM>
        <KM evidence="3">99 uM for NAD(+) with 17-beta-hydroxyandrost-4-en-3-one</KM>
        <KM evidence="3">25 uM for 3,22-dioxo-cholest-4-en-24-oyl-CoA</KM>
        <KM evidence="3">40 uM for NADH</KM>
    </kinetics>
</comment>
<comment type="pathway">
    <text evidence="3">Steroid metabolism; cholesterol degradation.</text>
</comment>
<comment type="subunit">
    <text evidence="3">Homodimer, with 1 active site on each face.</text>
</comment>
<comment type="domain">
    <text evidence="3">The protein surface forms a large groove around the active sites which is larger than homologs, probably to accommodate bulky sterol substrates.</text>
</comment>
<comment type="disruption phenotype">
    <text evidence="1 2">Cells lacking this gene are shown to be highly attenuated in a mouse tuberculosis model (PubMed:14569030). Required for growth on cholesterol (PubMed:21980284).</text>
</comment>
<comment type="similarity">
    <text evidence="5">Belongs to the short-chain dehydrogenases/reductases (SDR) family.</text>
</comment>
<sequence length="317" mass="32753">MKLTESNRSPRTTNTTDLSGKVAVVTGAAAGLGRAEALGLARLGATVVVNDVASALDASDVVDEIGAAAADAGAKAVAVAGDISQRATADELLASAVGLGGLDIVVNNAGITRDRMLFNMSDEEWDAVIAVHLRGHFLLTRNAAAYWRDKAKDAEGGSVFGRLVNTSSEAGLVGPVGQANYAAAKAGITALTLSAARALGRYGVCANVICPRARTAMTADVFGAAPDVEAGQIDPLSPQHVVSLVQFLASPAAAEVNGQVFIVYGPQVTLVSPPHMERRFSADGTSWDPTELTATLRDYFAGRDPEQSFSATDLMRQ</sequence>
<reference evidence="7" key="1">
    <citation type="journal article" date="1998" name="Nature">
        <title>Deciphering the biology of Mycobacterium tuberculosis from the complete genome sequence.</title>
        <authorList>
            <person name="Cole S.T."/>
            <person name="Brosch R."/>
            <person name="Parkhill J."/>
            <person name="Garnier T."/>
            <person name="Churcher C.M."/>
            <person name="Harris D.E."/>
            <person name="Gordon S.V."/>
            <person name="Eiglmeier K."/>
            <person name="Gas S."/>
            <person name="Barry C.E. III"/>
            <person name="Tekaia F."/>
            <person name="Badcock K."/>
            <person name="Basham D."/>
            <person name="Brown D."/>
            <person name="Chillingworth T."/>
            <person name="Connor R."/>
            <person name="Davies R.M."/>
            <person name="Devlin K."/>
            <person name="Feltwell T."/>
            <person name="Gentles S."/>
            <person name="Hamlin N."/>
            <person name="Holroyd S."/>
            <person name="Hornsby T."/>
            <person name="Jagels K."/>
            <person name="Krogh A."/>
            <person name="McLean J."/>
            <person name="Moule S."/>
            <person name="Murphy L.D."/>
            <person name="Oliver S."/>
            <person name="Osborne J."/>
            <person name="Quail M.A."/>
            <person name="Rajandream M.A."/>
            <person name="Rogers J."/>
            <person name="Rutter S."/>
            <person name="Seeger K."/>
            <person name="Skelton S."/>
            <person name="Squares S."/>
            <person name="Squares R."/>
            <person name="Sulston J.E."/>
            <person name="Taylor K."/>
            <person name="Whitehead S."/>
            <person name="Barrell B.G."/>
        </authorList>
    </citation>
    <scope>NUCLEOTIDE SEQUENCE [LARGE SCALE GENOMIC DNA]</scope>
    <source>
        <strain>ATCC 25618 / H37Rv</strain>
    </source>
</reference>
<reference key="2">
    <citation type="journal article" date="2003" name="Proc. Natl. Acad. Sci. U.S.A.">
        <title>Genetic requirements for mycobacterial survival during infection.</title>
        <authorList>
            <person name="Sassetti C.M."/>
            <person name="Rubin E.J."/>
        </authorList>
    </citation>
    <scope>DISRUPTION PHENOTYPE</scope>
    <source>
        <strain>ATCC 25618 / H37Rv</strain>
    </source>
</reference>
<reference evidence="11" key="3">
    <citation type="journal article" date="2011" name="Mol. Cell. Proteomics">
        <title>Proteogenomic analysis of Mycobacterium tuberculosis by high resolution mass spectrometry.</title>
        <authorList>
            <person name="Kelkar D.S."/>
            <person name="Kumar D."/>
            <person name="Kumar P."/>
            <person name="Balakrishnan L."/>
            <person name="Muthusamy B."/>
            <person name="Yadav A.K."/>
            <person name="Shrivastava P."/>
            <person name="Marimuthu A."/>
            <person name="Anand S."/>
            <person name="Sundaram H."/>
            <person name="Kingsbury R."/>
            <person name="Harsha H.C."/>
            <person name="Nair B."/>
            <person name="Prasad T.S."/>
            <person name="Chauhan D.S."/>
            <person name="Katoch K."/>
            <person name="Katoch V.M."/>
            <person name="Kumar P."/>
            <person name="Chaerkady R."/>
            <person name="Ramachandran S."/>
            <person name="Dash D."/>
            <person name="Pandey A."/>
        </authorList>
    </citation>
    <scope>IDENTIFICATION BY MASS SPECTROMETRY [LARGE SCALE ANALYSIS]</scope>
    <source>
        <strain>ATCC 25618 / H37Rv</strain>
    </source>
</reference>
<reference key="4">
    <citation type="journal article" date="2011" name="PLoS Pathog.">
        <title>High-resolution phenotypic profiling defines genes essential for mycobacterial growth and cholesterol catabolism.</title>
        <authorList>
            <person name="Griffin J.E."/>
            <person name="Gawronski J.D."/>
            <person name="Dejesus M.A."/>
            <person name="Ioerger T.R."/>
            <person name="Akerley B.J."/>
            <person name="Sassetti C.M."/>
        </authorList>
    </citation>
    <scope>DISRUPTION PHENOTYPE</scope>
    <source>
        <strain>ATCC 25618 / H37Rv</strain>
    </source>
</reference>
<reference evidence="9 10" key="5">
    <citation type="journal article" date="2021" name="ACS Infect. Dis.">
        <title>Enzymatic beta-Oxidation of the Cholesterol Side Chain in Mycobacterium tuberculosis Bifurcates Stereospecifically at Hydration of 3-Oxo-cholest-4,22-dien-24-oyl-CoA.</title>
        <authorList>
            <person name="Yuan T."/>
            <person name="Werman J.M."/>
            <person name="Yin X."/>
            <person name="Yang M."/>
            <person name="Garcia-Diaz M."/>
            <person name="Sampson N.S."/>
        </authorList>
    </citation>
    <scope>X-RAY CRYSTALLOGRAPHY (2.03 ANGSTROMS) ALONE AND IN COMPLEX WITH NAD(+)</scope>
    <scope>FUNCTION</scope>
    <scope>CATALYTIC ACTIVITY</scope>
    <scope>PROBABLE ACTIVE SITES</scope>
    <scope>BIOPHYSICOCHEMICAL PROPERTIES</scope>
    <scope>REACTION MECHANISM</scope>
    <scope>SUBUNIT</scope>
    <scope>DOMAIN</scope>
    <source>
        <strain>H37Rv</strain>
    </source>
</reference>
<gene>
    <name evidence="4" type="primary">chsB1</name>
    <name evidence="7" type="ordered locus">Rv3502c</name>
</gene>